<keyword id="KW-0963">Cytoplasm</keyword>
<keyword id="KW-0233">DNA recombination</keyword>
<evidence type="ECO:0000255" key="1">
    <source>
        <dbReference type="HAMAP-Rule" id="MF_00194"/>
    </source>
</evidence>
<protein>
    <recommendedName>
        <fullName evidence="1">Recombination-associated protein RdgC</fullName>
    </recommendedName>
</protein>
<gene>
    <name evidence="1" type="primary">rdgC</name>
    <name type="ordered locus">YPDSF_2842</name>
</gene>
<comment type="function">
    <text evidence="1">May be involved in recombination.</text>
</comment>
<comment type="subcellular location">
    <subcellularLocation>
        <location evidence="1">Cytoplasm</location>
        <location evidence="1">Nucleoid</location>
    </subcellularLocation>
</comment>
<comment type="similarity">
    <text evidence="1">Belongs to the RdgC family.</text>
</comment>
<sequence>MLWFKNLMVYRLSREVSLSADEMEKQLSAFSFTPCGSQDMAKTGWVSPMGSHSDALTHTVNGQIVICARKEEKILPSPVIKQELQDKIERLEGEQHRKLKKTEKDSLKDEVLHSLLPRAFSRFNQTFLWIDTVNDLIMVDAASAKRAEDTLALLRKSLGSLPVVPLTLENPIELTLTEWVRSKTLPAGFALMDEAELKAILEDGGVIRCKKQDLFSDEIAVHIEAGKLVTKLALDWQERIQLVLSDDGSLKRLKFADTLRDQNEDIDREDFAQRFDADFILMTSELAALIKNLIEALGGEAQH</sequence>
<reference key="1">
    <citation type="submission" date="2007-02" db="EMBL/GenBank/DDBJ databases">
        <title>Complete sequence of chromosome of Yersinia pestis Pestoides F.</title>
        <authorList>
            <consortium name="US DOE Joint Genome Institute"/>
            <person name="Copeland A."/>
            <person name="Lucas S."/>
            <person name="Lapidus A."/>
            <person name="Barry K."/>
            <person name="Detter J.C."/>
            <person name="Glavina del Rio T."/>
            <person name="Hammon N."/>
            <person name="Israni S."/>
            <person name="Dalin E."/>
            <person name="Tice H."/>
            <person name="Pitluck S."/>
            <person name="Di Bartolo G."/>
            <person name="Chain P."/>
            <person name="Malfatti S."/>
            <person name="Shin M."/>
            <person name="Vergez L."/>
            <person name="Schmutz J."/>
            <person name="Larimer F."/>
            <person name="Land M."/>
            <person name="Hauser L."/>
            <person name="Worsham P."/>
            <person name="Chu M."/>
            <person name="Bearden S."/>
            <person name="Garcia E."/>
            <person name="Richardson P."/>
        </authorList>
    </citation>
    <scope>NUCLEOTIDE SEQUENCE [LARGE SCALE GENOMIC DNA]</scope>
    <source>
        <strain>Pestoides F</strain>
    </source>
</reference>
<proteinExistence type="inferred from homology"/>
<organism>
    <name type="scientific">Yersinia pestis (strain Pestoides F)</name>
    <dbReference type="NCBI Taxonomy" id="386656"/>
    <lineage>
        <taxon>Bacteria</taxon>
        <taxon>Pseudomonadati</taxon>
        <taxon>Pseudomonadota</taxon>
        <taxon>Gammaproteobacteria</taxon>
        <taxon>Enterobacterales</taxon>
        <taxon>Yersiniaceae</taxon>
        <taxon>Yersinia</taxon>
    </lineage>
</organism>
<dbReference type="EMBL" id="CP000668">
    <property type="protein sequence ID" value="ABP41204.1"/>
    <property type="molecule type" value="Genomic_DNA"/>
</dbReference>
<dbReference type="RefSeq" id="WP_002208691.1">
    <property type="nucleotide sequence ID" value="NZ_CP009715.1"/>
</dbReference>
<dbReference type="SMR" id="A4TPJ2"/>
<dbReference type="GeneID" id="57975504"/>
<dbReference type="KEGG" id="ypp:YPDSF_2842"/>
<dbReference type="PATRIC" id="fig|386656.14.peg.103"/>
<dbReference type="GO" id="GO:0043590">
    <property type="term" value="C:bacterial nucleoid"/>
    <property type="evidence" value="ECO:0007669"/>
    <property type="project" value="TreeGrafter"/>
</dbReference>
<dbReference type="GO" id="GO:0005737">
    <property type="term" value="C:cytoplasm"/>
    <property type="evidence" value="ECO:0007669"/>
    <property type="project" value="UniProtKB-UniRule"/>
</dbReference>
<dbReference type="GO" id="GO:0003690">
    <property type="term" value="F:double-stranded DNA binding"/>
    <property type="evidence" value="ECO:0007669"/>
    <property type="project" value="TreeGrafter"/>
</dbReference>
<dbReference type="GO" id="GO:0006310">
    <property type="term" value="P:DNA recombination"/>
    <property type="evidence" value="ECO:0007669"/>
    <property type="project" value="UniProtKB-UniRule"/>
</dbReference>
<dbReference type="GO" id="GO:0000018">
    <property type="term" value="P:regulation of DNA recombination"/>
    <property type="evidence" value="ECO:0007669"/>
    <property type="project" value="TreeGrafter"/>
</dbReference>
<dbReference type="HAMAP" id="MF_00194">
    <property type="entry name" value="RdgC"/>
    <property type="match status" value="1"/>
</dbReference>
<dbReference type="InterPro" id="IPR007476">
    <property type="entry name" value="RdgC"/>
</dbReference>
<dbReference type="NCBIfam" id="NF001460">
    <property type="entry name" value="PRK00321.1-1"/>
    <property type="match status" value="1"/>
</dbReference>
<dbReference type="NCBIfam" id="NF001462">
    <property type="entry name" value="PRK00321.1-3"/>
    <property type="match status" value="1"/>
</dbReference>
<dbReference type="NCBIfam" id="NF001464">
    <property type="entry name" value="PRK00321.1-5"/>
    <property type="match status" value="1"/>
</dbReference>
<dbReference type="PANTHER" id="PTHR38103">
    <property type="entry name" value="RECOMBINATION-ASSOCIATED PROTEIN RDGC"/>
    <property type="match status" value="1"/>
</dbReference>
<dbReference type="PANTHER" id="PTHR38103:SF1">
    <property type="entry name" value="RECOMBINATION-ASSOCIATED PROTEIN RDGC"/>
    <property type="match status" value="1"/>
</dbReference>
<dbReference type="Pfam" id="PF04381">
    <property type="entry name" value="RdgC"/>
    <property type="match status" value="1"/>
</dbReference>
<feature type="chain" id="PRO_1000021250" description="Recombination-associated protein RdgC">
    <location>
        <begin position="1"/>
        <end position="303"/>
    </location>
</feature>
<name>RDGC_YERPP</name>
<accession>A4TPJ2</accession>